<feature type="chain" id="PRO_1000194996" description="Ribosomal RNA large subunit methyltransferase E">
    <location>
        <begin position="1"/>
        <end position="209"/>
    </location>
</feature>
<feature type="active site" description="Proton acceptor" evidence="1">
    <location>
        <position position="164"/>
    </location>
</feature>
<feature type="binding site" evidence="1">
    <location>
        <position position="63"/>
    </location>
    <ligand>
        <name>S-adenosyl-L-methionine</name>
        <dbReference type="ChEBI" id="CHEBI:59789"/>
    </ligand>
</feature>
<feature type="binding site" evidence="1">
    <location>
        <position position="65"/>
    </location>
    <ligand>
        <name>S-adenosyl-L-methionine</name>
        <dbReference type="ChEBI" id="CHEBI:59789"/>
    </ligand>
</feature>
<feature type="binding site" evidence="1">
    <location>
        <position position="83"/>
    </location>
    <ligand>
        <name>S-adenosyl-L-methionine</name>
        <dbReference type="ChEBI" id="CHEBI:59789"/>
    </ligand>
</feature>
<feature type="binding site" evidence="1">
    <location>
        <position position="99"/>
    </location>
    <ligand>
        <name>S-adenosyl-L-methionine</name>
        <dbReference type="ChEBI" id="CHEBI:59789"/>
    </ligand>
</feature>
<feature type="binding site" evidence="1">
    <location>
        <position position="124"/>
    </location>
    <ligand>
        <name>S-adenosyl-L-methionine</name>
        <dbReference type="ChEBI" id="CHEBI:59789"/>
    </ligand>
</feature>
<name>RLME_ECO45</name>
<reference key="1">
    <citation type="journal article" date="2009" name="PLoS Genet.">
        <title>Organised genome dynamics in the Escherichia coli species results in highly diverse adaptive paths.</title>
        <authorList>
            <person name="Touchon M."/>
            <person name="Hoede C."/>
            <person name="Tenaillon O."/>
            <person name="Barbe V."/>
            <person name="Baeriswyl S."/>
            <person name="Bidet P."/>
            <person name="Bingen E."/>
            <person name="Bonacorsi S."/>
            <person name="Bouchier C."/>
            <person name="Bouvet O."/>
            <person name="Calteau A."/>
            <person name="Chiapello H."/>
            <person name="Clermont O."/>
            <person name="Cruveiller S."/>
            <person name="Danchin A."/>
            <person name="Diard M."/>
            <person name="Dossat C."/>
            <person name="Karoui M.E."/>
            <person name="Frapy E."/>
            <person name="Garry L."/>
            <person name="Ghigo J.M."/>
            <person name="Gilles A.M."/>
            <person name="Johnson J."/>
            <person name="Le Bouguenec C."/>
            <person name="Lescat M."/>
            <person name="Mangenot S."/>
            <person name="Martinez-Jehanne V."/>
            <person name="Matic I."/>
            <person name="Nassif X."/>
            <person name="Oztas S."/>
            <person name="Petit M.A."/>
            <person name="Pichon C."/>
            <person name="Rouy Z."/>
            <person name="Ruf C.S."/>
            <person name="Schneider D."/>
            <person name="Tourret J."/>
            <person name="Vacherie B."/>
            <person name="Vallenet D."/>
            <person name="Medigue C."/>
            <person name="Rocha E.P.C."/>
            <person name="Denamur E."/>
        </authorList>
    </citation>
    <scope>NUCLEOTIDE SEQUENCE [LARGE SCALE GENOMIC DNA]</scope>
    <source>
        <strain>S88 / ExPEC</strain>
    </source>
</reference>
<gene>
    <name evidence="1" type="primary">rlmE</name>
    <name evidence="1" type="synonym">ftsJ</name>
    <name evidence="1" type="synonym">rrmJ</name>
    <name type="ordered locus">ECS88_3561</name>
</gene>
<proteinExistence type="inferred from homology"/>
<evidence type="ECO:0000255" key="1">
    <source>
        <dbReference type="HAMAP-Rule" id="MF_01547"/>
    </source>
</evidence>
<accession>B7MBU8</accession>
<comment type="function">
    <text evidence="1">Specifically methylates the uridine in position 2552 of 23S rRNA at the 2'-O position of the ribose in the fully assembled 50S ribosomal subunit.</text>
</comment>
<comment type="catalytic activity">
    <reaction evidence="1">
        <text>uridine(2552) in 23S rRNA + S-adenosyl-L-methionine = 2'-O-methyluridine(2552) in 23S rRNA + S-adenosyl-L-homocysteine + H(+)</text>
        <dbReference type="Rhea" id="RHEA:42720"/>
        <dbReference type="Rhea" id="RHEA-COMP:10202"/>
        <dbReference type="Rhea" id="RHEA-COMP:10203"/>
        <dbReference type="ChEBI" id="CHEBI:15378"/>
        <dbReference type="ChEBI" id="CHEBI:57856"/>
        <dbReference type="ChEBI" id="CHEBI:59789"/>
        <dbReference type="ChEBI" id="CHEBI:65315"/>
        <dbReference type="ChEBI" id="CHEBI:74478"/>
        <dbReference type="EC" id="2.1.1.166"/>
    </reaction>
</comment>
<comment type="subcellular location">
    <subcellularLocation>
        <location evidence="1">Cytoplasm</location>
    </subcellularLocation>
</comment>
<comment type="similarity">
    <text evidence="1">Belongs to the class I-like SAM-binding methyltransferase superfamily. RNA methyltransferase RlmE family.</text>
</comment>
<sequence length="209" mass="23335">MTGKKRSASSSRWLQEHFSDKYVQQAQKKGLRSRAWFKLDEIQQSDKLFKPGMTVVDLGAAPGGWSQYVVTQIGGKGRIIACDLLPMDPIVGVDFLQGDFRDELVMKALLERVGDSKVQVVMSDMAPNMSGTPAVDIPRAMYLVELALEMCRDVLAPGGSFVVKVFQGEGFDEYLREIRSLFTKVKVRKPDSSRARSREVYIVATGRKP</sequence>
<dbReference type="EC" id="2.1.1.166" evidence="1"/>
<dbReference type="EMBL" id="CU928161">
    <property type="protein sequence ID" value="CAR04789.1"/>
    <property type="molecule type" value="Genomic_DNA"/>
</dbReference>
<dbReference type="RefSeq" id="WP_000145975.1">
    <property type="nucleotide sequence ID" value="NC_011742.1"/>
</dbReference>
<dbReference type="SMR" id="B7MBU8"/>
<dbReference type="GeneID" id="93778802"/>
<dbReference type="KEGG" id="ecz:ECS88_3561"/>
<dbReference type="HOGENOM" id="CLU_009422_4_0_6"/>
<dbReference type="Proteomes" id="UP000000747">
    <property type="component" value="Chromosome"/>
</dbReference>
<dbReference type="GO" id="GO:0005737">
    <property type="term" value="C:cytoplasm"/>
    <property type="evidence" value="ECO:0007669"/>
    <property type="project" value="UniProtKB-SubCell"/>
</dbReference>
<dbReference type="GO" id="GO:0008650">
    <property type="term" value="F:rRNA (uridine-2'-O-)-methyltransferase activity"/>
    <property type="evidence" value="ECO:0007669"/>
    <property type="project" value="UniProtKB-UniRule"/>
</dbReference>
<dbReference type="CDD" id="cd02440">
    <property type="entry name" value="AdoMet_MTases"/>
    <property type="match status" value="1"/>
</dbReference>
<dbReference type="FunFam" id="3.40.50.150:FF:000005">
    <property type="entry name" value="Ribosomal RNA large subunit methyltransferase E"/>
    <property type="match status" value="1"/>
</dbReference>
<dbReference type="Gene3D" id="3.40.50.150">
    <property type="entry name" value="Vaccinia Virus protein VP39"/>
    <property type="match status" value="1"/>
</dbReference>
<dbReference type="HAMAP" id="MF_01547">
    <property type="entry name" value="RNA_methyltr_E"/>
    <property type="match status" value="1"/>
</dbReference>
<dbReference type="InterPro" id="IPR050082">
    <property type="entry name" value="RNA_methyltr_RlmE"/>
</dbReference>
<dbReference type="InterPro" id="IPR002877">
    <property type="entry name" value="RNA_MeTrfase_FtsJ_dom"/>
</dbReference>
<dbReference type="InterPro" id="IPR015507">
    <property type="entry name" value="rRNA-MeTfrase_E"/>
</dbReference>
<dbReference type="InterPro" id="IPR004512">
    <property type="entry name" value="rRNA_MeTrfase_gammaproteobac"/>
</dbReference>
<dbReference type="InterPro" id="IPR029063">
    <property type="entry name" value="SAM-dependent_MTases_sf"/>
</dbReference>
<dbReference type="NCBIfam" id="NF008390">
    <property type="entry name" value="PRK11188.1"/>
    <property type="match status" value="1"/>
</dbReference>
<dbReference type="NCBIfam" id="TIGR00438">
    <property type="entry name" value="rrmJ"/>
    <property type="match status" value="1"/>
</dbReference>
<dbReference type="PANTHER" id="PTHR10920">
    <property type="entry name" value="RIBOSOMAL RNA METHYLTRANSFERASE"/>
    <property type="match status" value="1"/>
</dbReference>
<dbReference type="PANTHER" id="PTHR10920:SF18">
    <property type="entry name" value="RRNA METHYLTRANSFERASE 2, MITOCHONDRIAL"/>
    <property type="match status" value="1"/>
</dbReference>
<dbReference type="Pfam" id="PF01728">
    <property type="entry name" value="FtsJ"/>
    <property type="match status" value="1"/>
</dbReference>
<dbReference type="PIRSF" id="PIRSF005461">
    <property type="entry name" value="23S_rRNA_mtase"/>
    <property type="match status" value="1"/>
</dbReference>
<dbReference type="SUPFAM" id="SSF53335">
    <property type="entry name" value="S-adenosyl-L-methionine-dependent methyltransferases"/>
    <property type="match status" value="1"/>
</dbReference>
<keyword id="KW-0963">Cytoplasm</keyword>
<keyword id="KW-0489">Methyltransferase</keyword>
<keyword id="KW-1185">Reference proteome</keyword>
<keyword id="KW-0698">rRNA processing</keyword>
<keyword id="KW-0949">S-adenosyl-L-methionine</keyword>
<keyword id="KW-0808">Transferase</keyword>
<protein>
    <recommendedName>
        <fullName evidence="1">Ribosomal RNA large subunit methyltransferase E</fullName>
        <ecNumber evidence="1">2.1.1.166</ecNumber>
    </recommendedName>
    <alternativeName>
        <fullName evidence="1">23S rRNA Um2552 methyltransferase</fullName>
    </alternativeName>
    <alternativeName>
        <fullName evidence="1">rRNA (uridine-2'-O-)-methyltransferase</fullName>
    </alternativeName>
</protein>
<organism>
    <name type="scientific">Escherichia coli O45:K1 (strain S88 / ExPEC)</name>
    <dbReference type="NCBI Taxonomy" id="585035"/>
    <lineage>
        <taxon>Bacteria</taxon>
        <taxon>Pseudomonadati</taxon>
        <taxon>Pseudomonadota</taxon>
        <taxon>Gammaproteobacteria</taxon>
        <taxon>Enterobacterales</taxon>
        <taxon>Enterobacteriaceae</taxon>
        <taxon>Escherichia</taxon>
    </lineage>
</organism>